<name>H2B_PYRO3</name>
<sequence length="137" mass="14845">MPPKAADKKPASKAPATASKAPEKKDAGKKTAASGDKKKRTKTRKETYSSYIYKVLKQVHPDTGISNRAMSILNSFVNDIFERVATEASKLAAYNKKSTISSREIQTSVRLILPGELAKHAVSEGTKAVTKYSSSTK</sequence>
<comment type="function">
    <text>Core component of nucleosome. Nucleosomes wrap and compact DNA into chromatin, limiting DNA accessibility to the cellular machineries which require DNA as a template. Histones thereby play a central role in transcription regulation, DNA repair, DNA replication and chromosomal stability. DNA accessibility is regulated via a complex set of post-translational modifications of histones, also called histone code, and nucleosome remodeling.</text>
</comment>
<comment type="subunit">
    <text>The nucleosome is a histone octamer containing two molecules each of H2A, H2B, H3 and H4 assembled in one H3-H4 heterotetramer and two H2A-H2B heterodimers. The octamer wraps approximately 147 bp of DNA.</text>
</comment>
<comment type="subcellular location">
    <subcellularLocation>
        <location>Nucleus</location>
    </subcellularLocation>
    <subcellularLocation>
        <location>Chromosome</location>
    </subcellularLocation>
</comment>
<comment type="PTM">
    <text evidence="1">Monoubiquitinated by the UBC2-BRE1 complex to form H2BK123ub1. H2BK123ub1 gives a specific tag for epigenetic transcriptional activation and is also prerequisite for H3K4me and H3K79me formation. H2BK123ub1 also modulates the formation of double-strand breaks during meiosis and is a prerequisite for DNA-damage checkpoint activation (By similarity).</text>
</comment>
<comment type="PTM">
    <text evidence="1">Phosphorylated by STE20 to form H2BS10ph during progression through meiotic prophase. May be correlated with chromosome condensation (By similarity).</text>
</comment>
<comment type="PTM">
    <text evidence="1">Acetylated by GCN5 to form H2BK11ac and H2BK16ac. H2BK16ac can also be formed by ESA1. Acetylation of N-terminal lysines and particularly formation of H2BK11acK16ac has a positive effect on transcription (By similarity).</text>
</comment>
<comment type="PTM">
    <text evidence="1">Sumoylation to form H2BK6su or H2BK7su, and probably also H2BK16su or H2BK17su, occurs preferentially near the telomeres and represses gene transcription.</text>
</comment>
<comment type="similarity">
    <text evidence="3">Belongs to the histone H2B family.</text>
</comment>
<comment type="caution">
    <text evidence="3">To ensure consistency between histone entries, we follow the 'Brno' nomenclature for histone modifications, with positions referring to those used in the literature for the 'closest' model organism. Due to slight variations in histone sequences between organisms and to the presence of initiator methionine in UniProtKB/Swiss-Prot sequences, the actual positions of modified amino acids in the sequence generally differ. In this entry the following conventions are used: H2BK6ac = acetylated Lys-8; H2BK6su = sumoylated Lys-8; H2BK7ac = acetylated Lys-9; H2BK7su = sumoylated Lys-9; H2BS10ph = phosphorylated Ser-12; H2BK11ac = acetylated Lys-13; H2BK16ac = acetylated Lys-24; H2BK16su = sumoylated Lys-24; H2BK17su = sumoylated Lys-25; H2BK123ub1 = monoubiquitinated Lys-131.</text>
</comment>
<proteinExistence type="evidence at transcript level"/>
<feature type="initiator methionine" description="Removed" evidence="1">
    <location>
        <position position="1"/>
    </location>
</feature>
<feature type="chain" id="PRO_0000423546" description="Histone H2B">
    <location>
        <begin position="2"/>
        <end position="137"/>
    </location>
</feature>
<feature type="region of interest" description="Disordered" evidence="2">
    <location>
        <begin position="1"/>
        <end position="45"/>
    </location>
</feature>
<feature type="compositionally biased region" description="Basic and acidic residues" evidence="2">
    <location>
        <begin position="1"/>
        <end position="10"/>
    </location>
</feature>
<feature type="modified residue" description="N6-acetyllysine; alternate" evidence="1">
    <location>
        <position position="8"/>
    </location>
</feature>
<feature type="modified residue" description="N6-acetyllysine; alternate" evidence="1">
    <location>
        <position position="9"/>
    </location>
</feature>
<feature type="modified residue" description="Phosphoserine" evidence="1">
    <location>
        <position position="12"/>
    </location>
</feature>
<feature type="modified residue" description="N6-acetyllysine" evidence="1">
    <location>
        <position position="13"/>
    </location>
</feature>
<feature type="modified residue" description="N6-acetyllysine; alternate" evidence="1">
    <location>
        <position position="24"/>
    </location>
</feature>
<feature type="cross-link" description="Glycyl lysine isopeptide (Lys-Gly) (interchain with G-Cter in SUMO); alternate" evidence="1">
    <location>
        <position position="8"/>
    </location>
</feature>
<feature type="cross-link" description="Glycyl lysine isopeptide (Lys-Gly) (interchain with G-Cter in SUMO); alternate" evidence="1">
    <location>
        <position position="9"/>
    </location>
</feature>
<feature type="cross-link" description="Glycyl lysine isopeptide (Lys-Gly) (interchain with G-Cter in SUMO); alternate" evidence="1">
    <location>
        <position position="24"/>
    </location>
</feature>
<feature type="cross-link" description="Glycyl lysine isopeptide (Lys-Gly) (interchain with G-Cter in SUMO)" evidence="1">
    <location>
        <position position="25"/>
    </location>
</feature>
<feature type="cross-link" description="Glycyl lysine isopeptide (Lys-Gly) (interchain with G-Cter in ubiquitin)" evidence="1">
    <location>
        <position position="131"/>
    </location>
</feature>
<evidence type="ECO:0000250" key="1"/>
<evidence type="ECO:0000256" key="2">
    <source>
        <dbReference type="SAM" id="MobiDB-lite"/>
    </source>
</evidence>
<evidence type="ECO:0000305" key="3"/>
<protein>
    <recommendedName>
        <fullName>Histone H2B</fullName>
    </recommendedName>
</protein>
<dbReference type="EMBL" id="AY850347">
    <property type="protein sequence ID" value="AAW69353.1"/>
    <property type="molecule type" value="mRNA"/>
</dbReference>
<dbReference type="EMBL" id="JH792942">
    <property type="protein sequence ID" value="ELQ36532.1"/>
    <property type="molecule type" value="Genomic_DNA"/>
</dbReference>
<dbReference type="SMR" id="L7I1W3"/>
<dbReference type="OrthoDB" id="667289at147550"/>
<dbReference type="Proteomes" id="UP000011086">
    <property type="component" value="Unassembled WGS sequence"/>
</dbReference>
<dbReference type="GO" id="GO:0000786">
    <property type="term" value="C:nucleosome"/>
    <property type="evidence" value="ECO:0007669"/>
    <property type="project" value="UniProtKB-KW"/>
</dbReference>
<dbReference type="GO" id="GO:0005634">
    <property type="term" value="C:nucleus"/>
    <property type="evidence" value="ECO:0007669"/>
    <property type="project" value="UniProtKB-SubCell"/>
</dbReference>
<dbReference type="GO" id="GO:0003677">
    <property type="term" value="F:DNA binding"/>
    <property type="evidence" value="ECO:0007669"/>
    <property type="project" value="UniProtKB-KW"/>
</dbReference>
<dbReference type="GO" id="GO:0046982">
    <property type="term" value="F:protein heterodimerization activity"/>
    <property type="evidence" value="ECO:0007669"/>
    <property type="project" value="InterPro"/>
</dbReference>
<dbReference type="GO" id="GO:0030527">
    <property type="term" value="F:structural constituent of chromatin"/>
    <property type="evidence" value="ECO:0007669"/>
    <property type="project" value="InterPro"/>
</dbReference>
<dbReference type="CDD" id="cd22910">
    <property type="entry name" value="HFD_H2B"/>
    <property type="match status" value="1"/>
</dbReference>
<dbReference type="FunFam" id="1.10.20.10:FF:000014">
    <property type="entry name" value="Histone H2B"/>
    <property type="match status" value="1"/>
</dbReference>
<dbReference type="Gene3D" id="1.10.20.10">
    <property type="entry name" value="Histone, subunit A"/>
    <property type="match status" value="1"/>
</dbReference>
<dbReference type="InterPro" id="IPR009072">
    <property type="entry name" value="Histone-fold"/>
</dbReference>
<dbReference type="InterPro" id="IPR007125">
    <property type="entry name" value="Histone_H2A/H2B/H3"/>
</dbReference>
<dbReference type="InterPro" id="IPR000558">
    <property type="entry name" value="Histone_H2B"/>
</dbReference>
<dbReference type="InterPro" id="IPR055333">
    <property type="entry name" value="HISTONE_H2B_site"/>
</dbReference>
<dbReference type="PANTHER" id="PTHR23428">
    <property type="entry name" value="HISTONE H2B"/>
    <property type="match status" value="1"/>
</dbReference>
<dbReference type="Pfam" id="PF00125">
    <property type="entry name" value="Histone"/>
    <property type="match status" value="1"/>
</dbReference>
<dbReference type="PRINTS" id="PR00621">
    <property type="entry name" value="HISTONEH2B"/>
</dbReference>
<dbReference type="SMART" id="SM00427">
    <property type="entry name" value="H2B"/>
    <property type="match status" value="1"/>
</dbReference>
<dbReference type="SUPFAM" id="SSF47113">
    <property type="entry name" value="Histone-fold"/>
    <property type="match status" value="1"/>
</dbReference>
<dbReference type="PROSITE" id="PS00357">
    <property type="entry name" value="HISTONE_H2B"/>
    <property type="match status" value="1"/>
</dbReference>
<accession>L7I1W3</accession>
<accession>A4QRH9</accession>
<accession>G4N7F4</accession>
<accession>Q5G577</accession>
<gene>
    <name type="primary">HTB1</name>
    <name type="ORF">OOU_Y34scaffold00655g31</name>
</gene>
<reference key="1">
    <citation type="submission" date="2004-12" db="EMBL/GenBank/DDBJ databases">
        <authorList>
            <person name="Chen B.S."/>
            <person name="Li Y.Z."/>
            <person name="Peng Y.L."/>
            <person name="Dong H.T."/>
            <person name="Li D.B."/>
        </authorList>
    </citation>
    <scope>NUCLEOTIDE SEQUENCE [MRNA]</scope>
    <source>
        <strain>Y34</strain>
        <tissue>Conidium</tissue>
    </source>
</reference>
<reference key="2">
    <citation type="journal article" date="2012" name="PLoS Genet.">
        <title>Comparative analysis of the genomes of two field isolates of the rice blast fungus Magnaporthe oryzae.</title>
        <authorList>
            <person name="Xue M."/>
            <person name="Yang J."/>
            <person name="Li Z."/>
            <person name="Hu S."/>
            <person name="Yao N."/>
            <person name="Dean R.A."/>
            <person name="Zhao W."/>
            <person name="Shen M."/>
            <person name="Zhang H."/>
            <person name="Li C."/>
            <person name="Liu L."/>
            <person name="Cao L."/>
            <person name="Xu X."/>
            <person name="Xing Y."/>
            <person name="Hsiang T."/>
            <person name="Zhang Z."/>
            <person name="Xu J.-R."/>
            <person name="Peng Y.-L."/>
        </authorList>
    </citation>
    <scope>NUCLEOTIDE SEQUENCE [LARGE SCALE GENOMIC DNA]</scope>
    <source>
        <strain>Y34</strain>
    </source>
</reference>
<organism>
    <name type="scientific">Pyricularia oryzae (strain Y34)</name>
    <name type="common">Rice blast fungus</name>
    <name type="synonym">Magnaporthe oryzae</name>
    <dbReference type="NCBI Taxonomy" id="1143189"/>
    <lineage>
        <taxon>Eukaryota</taxon>
        <taxon>Fungi</taxon>
        <taxon>Dikarya</taxon>
        <taxon>Ascomycota</taxon>
        <taxon>Pezizomycotina</taxon>
        <taxon>Sordariomycetes</taxon>
        <taxon>Sordariomycetidae</taxon>
        <taxon>Magnaporthales</taxon>
        <taxon>Pyriculariaceae</taxon>
        <taxon>Pyricularia</taxon>
    </lineage>
</organism>
<keyword id="KW-0007">Acetylation</keyword>
<keyword id="KW-0158">Chromosome</keyword>
<keyword id="KW-0238">DNA-binding</keyword>
<keyword id="KW-1017">Isopeptide bond</keyword>
<keyword id="KW-0544">Nucleosome core</keyword>
<keyword id="KW-0539">Nucleus</keyword>
<keyword id="KW-0597">Phosphoprotein</keyword>
<keyword id="KW-0832">Ubl conjugation</keyword>